<accession>P54446</accession>
<name>YRKS_BACSU</name>
<sequence length="54" mass="6402">MKVIIIEGLQTDKCMNDCYHYLIKLYRQEIQGDSNISWNKRSRDRASTARSRPV</sequence>
<proteinExistence type="predicted"/>
<reference key="1">
    <citation type="journal article" date="1988" name="J. Bacteriol.">
        <title>Transcriptional regulation and structure of the Bacillus subtilis sporulation locus spoIIIC.</title>
        <authorList>
            <person name="Errington J."/>
            <person name="Rong S."/>
            <person name="Rosenkrantz M.S."/>
            <person name="Sonenshein A.L."/>
        </authorList>
    </citation>
    <scope>NUCLEOTIDE SEQUENCE [GENOMIC DNA]</scope>
</reference>
<reference key="2">
    <citation type="journal article" date="1996" name="Microbiology">
        <title>Systematic sequencing of the 283 kb 210 degrees-232 degrees region of the Bacillus subtilis genome containing the skin element and many sporulation genes.</title>
        <authorList>
            <person name="Mizuno M."/>
            <person name="Masuda S."/>
            <person name="Takemaru K."/>
            <person name="Hosono S."/>
            <person name="Sato T."/>
            <person name="Takeuchi M."/>
            <person name="Kobayashi Y."/>
        </authorList>
    </citation>
    <scope>NUCLEOTIDE SEQUENCE [GENOMIC DNA]</scope>
    <source>
        <strain>168 / JH642</strain>
    </source>
</reference>
<reference key="3">
    <citation type="journal article" date="1997" name="Nature">
        <title>The complete genome sequence of the Gram-positive bacterium Bacillus subtilis.</title>
        <authorList>
            <person name="Kunst F."/>
            <person name="Ogasawara N."/>
            <person name="Moszer I."/>
            <person name="Albertini A.M."/>
            <person name="Alloni G."/>
            <person name="Azevedo V."/>
            <person name="Bertero M.G."/>
            <person name="Bessieres P."/>
            <person name="Bolotin A."/>
            <person name="Borchert S."/>
            <person name="Borriss R."/>
            <person name="Boursier L."/>
            <person name="Brans A."/>
            <person name="Braun M."/>
            <person name="Brignell S.C."/>
            <person name="Bron S."/>
            <person name="Brouillet S."/>
            <person name="Bruschi C.V."/>
            <person name="Caldwell B."/>
            <person name="Capuano V."/>
            <person name="Carter N.M."/>
            <person name="Choi S.-K."/>
            <person name="Codani J.-J."/>
            <person name="Connerton I.F."/>
            <person name="Cummings N.J."/>
            <person name="Daniel R.A."/>
            <person name="Denizot F."/>
            <person name="Devine K.M."/>
            <person name="Duesterhoeft A."/>
            <person name="Ehrlich S.D."/>
            <person name="Emmerson P.T."/>
            <person name="Entian K.-D."/>
            <person name="Errington J."/>
            <person name="Fabret C."/>
            <person name="Ferrari E."/>
            <person name="Foulger D."/>
            <person name="Fritz C."/>
            <person name="Fujita M."/>
            <person name="Fujita Y."/>
            <person name="Fuma S."/>
            <person name="Galizzi A."/>
            <person name="Galleron N."/>
            <person name="Ghim S.-Y."/>
            <person name="Glaser P."/>
            <person name="Goffeau A."/>
            <person name="Golightly E.J."/>
            <person name="Grandi G."/>
            <person name="Guiseppi G."/>
            <person name="Guy B.J."/>
            <person name="Haga K."/>
            <person name="Haiech J."/>
            <person name="Harwood C.R."/>
            <person name="Henaut A."/>
            <person name="Hilbert H."/>
            <person name="Holsappel S."/>
            <person name="Hosono S."/>
            <person name="Hullo M.-F."/>
            <person name="Itaya M."/>
            <person name="Jones L.-M."/>
            <person name="Joris B."/>
            <person name="Karamata D."/>
            <person name="Kasahara Y."/>
            <person name="Klaerr-Blanchard M."/>
            <person name="Klein C."/>
            <person name="Kobayashi Y."/>
            <person name="Koetter P."/>
            <person name="Koningstein G."/>
            <person name="Krogh S."/>
            <person name="Kumano M."/>
            <person name="Kurita K."/>
            <person name="Lapidus A."/>
            <person name="Lardinois S."/>
            <person name="Lauber J."/>
            <person name="Lazarevic V."/>
            <person name="Lee S.-M."/>
            <person name="Levine A."/>
            <person name="Liu H."/>
            <person name="Masuda S."/>
            <person name="Mauel C."/>
            <person name="Medigue C."/>
            <person name="Medina N."/>
            <person name="Mellado R.P."/>
            <person name="Mizuno M."/>
            <person name="Moestl D."/>
            <person name="Nakai S."/>
            <person name="Noback M."/>
            <person name="Noone D."/>
            <person name="O'Reilly M."/>
            <person name="Ogawa K."/>
            <person name="Ogiwara A."/>
            <person name="Oudega B."/>
            <person name="Park S.-H."/>
            <person name="Parro V."/>
            <person name="Pohl T.M."/>
            <person name="Portetelle D."/>
            <person name="Porwollik S."/>
            <person name="Prescott A.M."/>
            <person name="Presecan E."/>
            <person name="Pujic P."/>
            <person name="Purnelle B."/>
            <person name="Rapoport G."/>
            <person name="Rey M."/>
            <person name="Reynolds S."/>
            <person name="Rieger M."/>
            <person name="Rivolta C."/>
            <person name="Rocha E."/>
            <person name="Roche B."/>
            <person name="Rose M."/>
            <person name="Sadaie Y."/>
            <person name="Sato T."/>
            <person name="Scanlan E."/>
            <person name="Schleich S."/>
            <person name="Schroeter R."/>
            <person name="Scoffone F."/>
            <person name="Sekiguchi J."/>
            <person name="Sekowska A."/>
            <person name="Seror S.J."/>
            <person name="Serror P."/>
            <person name="Shin B.-S."/>
            <person name="Soldo B."/>
            <person name="Sorokin A."/>
            <person name="Tacconi E."/>
            <person name="Takagi T."/>
            <person name="Takahashi H."/>
            <person name="Takemaru K."/>
            <person name="Takeuchi M."/>
            <person name="Tamakoshi A."/>
            <person name="Tanaka T."/>
            <person name="Terpstra P."/>
            <person name="Tognoni A."/>
            <person name="Tosato V."/>
            <person name="Uchiyama S."/>
            <person name="Vandenbol M."/>
            <person name="Vannier F."/>
            <person name="Vassarotti A."/>
            <person name="Viari A."/>
            <person name="Wambutt R."/>
            <person name="Wedler E."/>
            <person name="Wedler H."/>
            <person name="Weitzenegger T."/>
            <person name="Winters P."/>
            <person name="Wipat A."/>
            <person name="Yamamoto H."/>
            <person name="Yamane K."/>
            <person name="Yasumoto K."/>
            <person name="Yata K."/>
            <person name="Yoshida K."/>
            <person name="Yoshikawa H.-F."/>
            <person name="Zumstein E."/>
            <person name="Yoshikawa H."/>
            <person name="Danchin A."/>
        </authorList>
    </citation>
    <scope>NUCLEOTIDE SEQUENCE [LARGE SCALE GENOMIC DNA]</scope>
    <source>
        <strain>168</strain>
    </source>
</reference>
<feature type="chain" id="PRO_0000049880" description="Uncharacterized protein YrkS">
    <location>
        <begin position="1"/>
        <end position="54"/>
    </location>
</feature>
<dbReference type="EMBL" id="M19299">
    <property type="status" value="NOT_ANNOTATED_CDS"/>
    <property type="molecule type" value="Genomic_DNA"/>
</dbReference>
<dbReference type="EMBL" id="D84432">
    <property type="protein sequence ID" value="BAA12374.1"/>
    <property type="molecule type" value="Genomic_DNA"/>
</dbReference>
<dbReference type="EMBL" id="AL009126">
    <property type="protein sequence ID" value="CAB14581.1"/>
    <property type="molecule type" value="Genomic_DNA"/>
</dbReference>
<dbReference type="PIR" id="A69978">
    <property type="entry name" value="A69978"/>
</dbReference>
<dbReference type="RefSeq" id="NP_390517.1">
    <property type="nucleotide sequence ID" value="NC_000964.3"/>
</dbReference>
<dbReference type="RefSeq" id="WP_010886576.1">
    <property type="nucleotide sequence ID" value="NZ_OZ025638.1"/>
</dbReference>
<dbReference type="FunCoup" id="P54446">
    <property type="interactions" value="1"/>
</dbReference>
<dbReference type="STRING" id="224308.BSU26400"/>
<dbReference type="PaxDb" id="224308-BSU26400"/>
<dbReference type="EnsemblBacteria" id="CAB14581">
    <property type="protein sequence ID" value="CAB14581"/>
    <property type="gene ID" value="BSU_26400"/>
</dbReference>
<dbReference type="GeneID" id="937670"/>
<dbReference type="KEGG" id="bsu:BSU26400"/>
<dbReference type="InParanoid" id="P54446"/>
<dbReference type="OrthoDB" id="2890190at2"/>
<dbReference type="BioCyc" id="BSUB:BSU26400-MONOMER"/>
<dbReference type="Proteomes" id="UP000001570">
    <property type="component" value="Chromosome"/>
</dbReference>
<keyword id="KW-1185">Reference proteome</keyword>
<protein>
    <recommendedName>
        <fullName>Uncharacterized protein YrkS</fullName>
    </recommendedName>
</protein>
<gene>
    <name type="primary">yrkS</name>
    <name type="ordered locus">BSU26400</name>
</gene>
<organism>
    <name type="scientific">Bacillus subtilis (strain 168)</name>
    <dbReference type="NCBI Taxonomy" id="224308"/>
    <lineage>
        <taxon>Bacteria</taxon>
        <taxon>Bacillati</taxon>
        <taxon>Bacillota</taxon>
        <taxon>Bacilli</taxon>
        <taxon>Bacillales</taxon>
        <taxon>Bacillaceae</taxon>
        <taxon>Bacillus</taxon>
    </lineage>
</organism>